<sequence>MNTPAVRFAARTVRVKAPGKINVSLDVGPRRPDGYHSVASVYLAVSLYEEVAATSTETPGITVSLSPDSTLDLDAVDIPLDASNLAYRAAAIMADVSEHATGVHLEITKRVPVAGGMGGGSADAAATLLACDALWNSGLSREELAHLAAELGADVPFSLLGGTAVGLGVGDQLSPALAKAKTHWVLVTADFGLSTPEVFRTLDRLREAEGVDADEPTGVDPNILAALRGGDADALSRILVNDLQRASIELAPSLRDTLGIGESHGAIAGIVSGSGPTVALLADDSVAAEALAEDLQHQGLSALAVHGPVPGARIISDTLL</sequence>
<accession>B8HF09</accession>
<gene>
    <name evidence="1" type="primary">ispE</name>
    <name type="ordered locus">Achl_1284</name>
</gene>
<protein>
    <recommendedName>
        <fullName evidence="1">4-diphosphocytidyl-2-C-methyl-D-erythritol kinase</fullName>
        <shortName evidence="1">CMK</shortName>
        <ecNumber evidence="1">2.7.1.148</ecNumber>
    </recommendedName>
    <alternativeName>
        <fullName evidence="1">4-(cytidine-5'-diphospho)-2-C-methyl-D-erythritol kinase</fullName>
    </alternativeName>
</protein>
<evidence type="ECO:0000255" key="1">
    <source>
        <dbReference type="HAMAP-Rule" id="MF_00061"/>
    </source>
</evidence>
<organism>
    <name type="scientific">Pseudarthrobacter chlorophenolicus (strain ATCC 700700 / DSM 12829 / CIP 107037 / JCM 12360 / KCTC 9906 / NCIMB 13794 / A6)</name>
    <name type="common">Arthrobacter chlorophenolicus</name>
    <dbReference type="NCBI Taxonomy" id="452863"/>
    <lineage>
        <taxon>Bacteria</taxon>
        <taxon>Bacillati</taxon>
        <taxon>Actinomycetota</taxon>
        <taxon>Actinomycetes</taxon>
        <taxon>Micrococcales</taxon>
        <taxon>Micrococcaceae</taxon>
        <taxon>Pseudarthrobacter</taxon>
    </lineage>
</organism>
<name>ISPE_PSECP</name>
<proteinExistence type="inferred from homology"/>
<reference key="1">
    <citation type="submission" date="2009-01" db="EMBL/GenBank/DDBJ databases">
        <title>Complete sequence of chromosome of Arthrobacter chlorophenolicus A6.</title>
        <authorList>
            <consortium name="US DOE Joint Genome Institute"/>
            <person name="Lucas S."/>
            <person name="Copeland A."/>
            <person name="Lapidus A."/>
            <person name="Glavina del Rio T."/>
            <person name="Tice H."/>
            <person name="Bruce D."/>
            <person name="Goodwin L."/>
            <person name="Pitluck S."/>
            <person name="Goltsman E."/>
            <person name="Clum A."/>
            <person name="Larimer F."/>
            <person name="Land M."/>
            <person name="Hauser L."/>
            <person name="Kyrpides N."/>
            <person name="Mikhailova N."/>
            <person name="Jansson J."/>
            <person name="Richardson P."/>
        </authorList>
    </citation>
    <scope>NUCLEOTIDE SEQUENCE [LARGE SCALE GENOMIC DNA]</scope>
    <source>
        <strain>ATCC 700700 / DSM 12829 / CIP 107037 / JCM 12360 / KCTC 9906 / NCIMB 13794 / A6</strain>
    </source>
</reference>
<feature type="chain" id="PRO_1000117876" description="4-diphosphocytidyl-2-C-methyl-D-erythritol kinase">
    <location>
        <begin position="1"/>
        <end position="320"/>
    </location>
</feature>
<feature type="active site" evidence="1">
    <location>
        <position position="20"/>
    </location>
</feature>
<feature type="active site" evidence="1">
    <location>
        <position position="154"/>
    </location>
</feature>
<feature type="binding site" evidence="1">
    <location>
        <begin position="112"/>
        <end position="122"/>
    </location>
    <ligand>
        <name>ATP</name>
        <dbReference type="ChEBI" id="CHEBI:30616"/>
    </ligand>
</feature>
<dbReference type="EC" id="2.7.1.148" evidence="1"/>
<dbReference type="EMBL" id="CP001341">
    <property type="protein sequence ID" value="ACL39275.1"/>
    <property type="molecule type" value="Genomic_DNA"/>
</dbReference>
<dbReference type="RefSeq" id="WP_015936498.1">
    <property type="nucleotide sequence ID" value="NC_011886.1"/>
</dbReference>
<dbReference type="SMR" id="B8HF09"/>
<dbReference type="STRING" id="452863.Achl_1284"/>
<dbReference type="KEGG" id="ach:Achl_1284"/>
<dbReference type="eggNOG" id="COG1947">
    <property type="taxonomic scope" value="Bacteria"/>
</dbReference>
<dbReference type="HOGENOM" id="CLU_053057_1_1_11"/>
<dbReference type="OrthoDB" id="3173073at2"/>
<dbReference type="UniPathway" id="UPA00056">
    <property type="reaction ID" value="UER00094"/>
</dbReference>
<dbReference type="Proteomes" id="UP000002505">
    <property type="component" value="Chromosome"/>
</dbReference>
<dbReference type="GO" id="GO:0050515">
    <property type="term" value="F:4-(cytidine 5'-diphospho)-2-C-methyl-D-erythritol kinase activity"/>
    <property type="evidence" value="ECO:0007669"/>
    <property type="project" value="UniProtKB-UniRule"/>
</dbReference>
<dbReference type="GO" id="GO:0005524">
    <property type="term" value="F:ATP binding"/>
    <property type="evidence" value="ECO:0007669"/>
    <property type="project" value="UniProtKB-UniRule"/>
</dbReference>
<dbReference type="GO" id="GO:0019288">
    <property type="term" value="P:isopentenyl diphosphate biosynthetic process, methylerythritol 4-phosphate pathway"/>
    <property type="evidence" value="ECO:0007669"/>
    <property type="project" value="UniProtKB-UniRule"/>
</dbReference>
<dbReference type="GO" id="GO:0016114">
    <property type="term" value="P:terpenoid biosynthetic process"/>
    <property type="evidence" value="ECO:0007669"/>
    <property type="project" value="InterPro"/>
</dbReference>
<dbReference type="Gene3D" id="3.30.230.10">
    <property type="match status" value="1"/>
</dbReference>
<dbReference type="Gene3D" id="3.30.70.890">
    <property type="entry name" value="GHMP kinase, C-terminal domain"/>
    <property type="match status" value="1"/>
</dbReference>
<dbReference type="HAMAP" id="MF_00061">
    <property type="entry name" value="IspE"/>
    <property type="match status" value="1"/>
</dbReference>
<dbReference type="InterPro" id="IPR013750">
    <property type="entry name" value="GHMP_kinase_C_dom"/>
</dbReference>
<dbReference type="InterPro" id="IPR036554">
    <property type="entry name" value="GHMP_kinase_C_sf"/>
</dbReference>
<dbReference type="InterPro" id="IPR006204">
    <property type="entry name" value="GHMP_kinase_N_dom"/>
</dbReference>
<dbReference type="InterPro" id="IPR004424">
    <property type="entry name" value="IspE"/>
</dbReference>
<dbReference type="InterPro" id="IPR020568">
    <property type="entry name" value="Ribosomal_Su5_D2-typ_SF"/>
</dbReference>
<dbReference type="InterPro" id="IPR014721">
    <property type="entry name" value="Ribsml_uS5_D2-typ_fold_subgr"/>
</dbReference>
<dbReference type="NCBIfam" id="TIGR00154">
    <property type="entry name" value="ispE"/>
    <property type="match status" value="1"/>
</dbReference>
<dbReference type="NCBIfam" id="NF002870">
    <property type="entry name" value="PRK03188.1"/>
    <property type="match status" value="1"/>
</dbReference>
<dbReference type="PANTHER" id="PTHR43527">
    <property type="entry name" value="4-DIPHOSPHOCYTIDYL-2-C-METHYL-D-ERYTHRITOL KINASE, CHLOROPLASTIC"/>
    <property type="match status" value="1"/>
</dbReference>
<dbReference type="PANTHER" id="PTHR43527:SF2">
    <property type="entry name" value="4-DIPHOSPHOCYTIDYL-2-C-METHYL-D-ERYTHRITOL KINASE, CHLOROPLASTIC"/>
    <property type="match status" value="1"/>
</dbReference>
<dbReference type="Pfam" id="PF08544">
    <property type="entry name" value="GHMP_kinases_C"/>
    <property type="match status" value="1"/>
</dbReference>
<dbReference type="Pfam" id="PF00288">
    <property type="entry name" value="GHMP_kinases_N"/>
    <property type="match status" value="1"/>
</dbReference>
<dbReference type="PIRSF" id="PIRSF010376">
    <property type="entry name" value="IspE"/>
    <property type="match status" value="1"/>
</dbReference>
<dbReference type="SUPFAM" id="SSF55060">
    <property type="entry name" value="GHMP Kinase, C-terminal domain"/>
    <property type="match status" value="1"/>
</dbReference>
<dbReference type="SUPFAM" id="SSF54211">
    <property type="entry name" value="Ribosomal protein S5 domain 2-like"/>
    <property type="match status" value="1"/>
</dbReference>
<comment type="function">
    <text evidence="1">Catalyzes the phosphorylation of the position 2 hydroxy group of 4-diphosphocytidyl-2C-methyl-D-erythritol.</text>
</comment>
<comment type="catalytic activity">
    <reaction evidence="1">
        <text>4-CDP-2-C-methyl-D-erythritol + ATP = 4-CDP-2-C-methyl-D-erythritol 2-phosphate + ADP + H(+)</text>
        <dbReference type="Rhea" id="RHEA:18437"/>
        <dbReference type="ChEBI" id="CHEBI:15378"/>
        <dbReference type="ChEBI" id="CHEBI:30616"/>
        <dbReference type="ChEBI" id="CHEBI:57823"/>
        <dbReference type="ChEBI" id="CHEBI:57919"/>
        <dbReference type="ChEBI" id="CHEBI:456216"/>
        <dbReference type="EC" id="2.7.1.148"/>
    </reaction>
</comment>
<comment type="pathway">
    <text evidence="1">Isoprenoid biosynthesis; isopentenyl diphosphate biosynthesis via DXP pathway; isopentenyl diphosphate from 1-deoxy-D-xylulose 5-phosphate: step 3/6.</text>
</comment>
<comment type="similarity">
    <text evidence="1">Belongs to the GHMP kinase family. IspE subfamily.</text>
</comment>
<keyword id="KW-0067">ATP-binding</keyword>
<keyword id="KW-0414">Isoprene biosynthesis</keyword>
<keyword id="KW-0418">Kinase</keyword>
<keyword id="KW-0547">Nucleotide-binding</keyword>
<keyword id="KW-0808">Transferase</keyword>